<name>CP19A_TAEGU</name>
<keyword id="KW-0349">Heme</keyword>
<keyword id="KW-0408">Iron</keyword>
<keyword id="KW-0443">Lipid metabolism</keyword>
<keyword id="KW-0472">Membrane</keyword>
<keyword id="KW-0479">Metal-binding</keyword>
<keyword id="KW-0503">Monooxygenase</keyword>
<keyword id="KW-0560">Oxidoreductase</keyword>
<keyword id="KW-1185">Reference proteome</keyword>
<gene>
    <name type="primary">CYP19A1</name>
    <name type="synonym">CYP19</name>
</gene>
<proteinExistence type="evidence at transcript level"/>
<comment type="function">
    <text>Catalyzes the formation of aromatic C18 estrogens from C19 androgens.</text>
</comment>
<comment type="catalytic activity">
    <reaction evidence="2">
        <text>testosterone + 3 reduced [NADPH--hemoprotein reductase] + 3 O2 = 17beta-estradiol + formate + 3 oxidized [NADPH--hemoprotein reductase] + 4 H2O + 4 H(+)</text>
        <dbReference type="Rhea" id="RHEA:38191"/>
        <dbReference type="Rhea" id="RHEA-COMP:11964"/>
        <dbReference type="Rhea" id="RHEA-COMP:11965"/>
        <dbReference type="ChEBI" id="CHEBI:15377"/>
        <dbReference type="ChEBI" id="CHEBI:15378"/>
        <dbReference type="ChEBI" id="CHEBI:15379"/>
        <dbReference type="ChEBI" id="CHEBI:15740"/>
        <dbReference type="ChEBI" id="CHEBI:16469"/>
        <dbReference type="ChEBI" id="CHEBI:17347"/>
        <dbReference type="ChEBI" id="CHEBI:57618"/>
        <dbReference type="ChEBI" id="CHEBI:58210"/>
        <dbReference type="EC" id="1.14.14.14"/>
    </reaction>
</comment>
<comment type="catalytic activity">
    <reaction evidence="2">
        <text>androst-4-ene-3,17-dione + 3 reduced [NADPH--hemoprotein reductase] + 3 O2 = estrone + formate + 3 oxidized [NADPH--hemoprotein reductase] + 4 H2O + 4 H(+)</text>
        <dbReference type="Rhea" id="RHEA:38195"/>
        <dbReference type="Rhea" id="RHEA-COMP:11964"/>
        <dbReference type="Rhea" id="RHEA-COMP:11965"/>
        <dbReference type="ChEBI" id="CHEBI:15377"/>
        <dbReference type="ChEBI" id="CHEBI:15378"/>
        <dbReference type="ChEBI" id="CHEBI:15379"/>
        <dbReference type="ChEBI" id="CHEBI:15740"/>
        <dbReference type="ChEBI" id="CHEBI:16422"/>
        <dbReference type="ChEBI" id="CHEBI:17263"/>
        <dbReference type="ChEBI" id="CHEBI:57618"/>
        <dbReference type="ChEBI" id="CHEBI:58210"/>
        <dbReference type="EC" id="1.14.14.14"/>
    </reaction>
</comment>
<comment type="cofactor">
    <cofactor evidence="1">
        <name>heme</name>
        <dbReference type="ChEBI" id="CHEBI:30413"/>
    </cofactor>
</comment>
<comment type="subcellular location">
    <subcellularLocation>
        <location>Membrane</location>
        <topology>Peripheral membrane protein</topology>
    </subcellularLocation>
</comment>
<comment type="similarity">
    <text evidence="3">Belongs to the cytochrome P450 family.</text>
</comment>
<evidence type="ECO:0000250" key="1"/>
<evidence type="ECO:0000250" key="2">
    <source>
        <dbReference type="UniProtKB" id="P11511"/>
    </source>
</evidence>
<evidence type="ECO:0000305" key="3"/>
<organism>
    <name type="scientific">Taeniopygia guttata</name>
    <name type="common">Zebra finch</name>
    <name type="synonym">Poephila guttata</name>
    <dbReference type="NCBI Taxonomy" id="59729"/>
    <lineage>
        <taxon>Eukaryota</taxon>
        <taxon>Metazoa</taxon>
        <taxon>Chordata</taxon>
        <taxon>Craniata</taxon>
        <taxon>Vertebrata</taxon>
        <taxon>Euteleostomi</taxon>
        <taxon>Archelosauria</taxon>
        <taxon>Archosauria</taxon>
        <taxon>Dinosauria</taxon>
        <taxon>Saurischia</taxon>
        <taxon>Theropoda</taxon>
        <taxon>Coelurosauria</taxon>
        <taxon>Aves</taxon>
        <taxon>Neognathae</taxon>
        <taxon>Neoaves</taxon>
        <taxon>Telluraves</taxon>
        <taxon>Australaves</taxon>
        <taxon>Passeriformes</taxon>
        <taxon>Passeroidea</taxon>
        <taxon>Estrildidae</taxon>
        <taxon>Estrildinae</taxon>
        <taxon>Taeniopygia</taxon>
    </lineage>
</organism>
<dbReference type="EC" id="1.14.14.14" evidence="2"/>
<dbReference type="EMBL" id="L81143">
    <property type="protein sequence ID" value="AAL77515.1"/>
    <property type="molecule type" value="mRNA"/>
</dbReference>
<dbReference type="EMBL" id="S75898">
    <property type="protein sequence ID" value="AAB32404.1"/>
    <property type="molecule type" value="mRNA"/>
</dbReference>
<dbReference type="PIR" id="I51271">
    <property type="entry name" value="I51271"/>
</dbReference>
<dbReference type="RefSeq" id="NP_001070159.1">
    <property type="nucleotide sequence ID" value="NM_001076691.2"/>
</dbReference>
<dbReference type="SMR" id="Q92112"/>
<dbReference type="FunCoup" id="Q92112">
    <property type="interactions" value="2"/>
</dbReference>
<dbReference type="STRING" id="59729.ENSTGUP00000007225"/>
<dbReference type="GeneID" id="751777"/>
<dbReference type="KEGG" id="tgu:751777"/>
<dbReference type="CTD" id="1588"/>
<dbReference type="InParanoid" id="Q92112"/>
<dbReference type="OrthoDB" id="1470350at2759"/>
<dbReference type="Proteomes" id="UP000007754">
    <property type="component" value="Unplaced"/>
</dbReference>
<dbReference type="GO" id="GO:0044297">
    <property type="term" value="C:cell body"/>
    <property type="evidence" value="ECO:0000314"/>
    <property type="project" value="AgBase"/>
</dbReference>
<dbReference type="GO" id="GO:0030425">
    <property type="term" value="C:dendrite"/>
    <property type="evidence" value="ECO:0000314"/>
    <property type="project" value="AgBase"/>
</dbReference>
<dbReference type="GO" id="GO:0005783">
    <property type="term" value="C:endoplasmic reticulum"/>
    <property type="evidence" value="ECO:0007669"/>
    <property type="project" value="TreeGrafter"/>
</dbReference>
<dbReference type="GO" id="GO:0016020">
    <property type="term" value="C:membrane"/>
    <property type="evidence" value="ECO:0007669"/>
    <property type="project" value="UniProtKB-SubCell"/>
</dbReference>
<dbReference type="GO" id="GO:0043025">
    <property type="term" value="C:neuronal cell body"/>
    <property type="evidence" value="ECO:0000314"/>
    <property type="project" value="AgBase"/>
</dbReference>
<dbReference type="GO" id="GO:0043195">
    <property type="term" value="C:terminal bouton"/>
    <property type="evidence" value="ECO:0000314"/>
    <property type="project" value="AgBase"/>
</dbReference>
<dbReference type="GO" id="GO:0070330">
    <property type="term" value="F:aromatase activity"/>
    <property type="evidence" value="ECO:0000314"/>
    <property type="project" value="AgBase"/>
</dbReference>
<dbReference type="GO" id="GO:0020037">
    <property type="term" value="F:heme binding"/>
    <property type="evidence" value="ECO:0007669"/>
    <property type="project" value="InterPro"/>
</dbReference>
<dbReference type="GO" id="GO:0005506">
    <property type="term" value="F:iron ion binding"/>
    <property type="evidence" value="ECO:0007669"/>
    <property type="project" value="InterPro"/>
</dbReference>
<dbReference type="GO" id="GO:0007420">
    <property type="term" value="P:brain development"/>
    <property type="evidence" value="ECO:0000315"/>
    <property type="project" value="AgBase"/>
</dbReference>
<dbReference type="GO" id="GO:0071392">
    <property type="term" value="P:cellular response to estradiol stimulus"/>
    <property type="evidence" value="ECO:0000314"/>
    <property type="project" value="AgBase"/>
</dbReference>
<dbReference type="GO" id="GO:0006703">
    <property type="term" value="P:estrogen biosynthetic process"/>
    <property type="evidence" value="ECO:0000314"/>
    <property type="project" value="AgBase"/>
</dbReference>
<dbReference type="GO" id="GO:0008585">
    <property type="term" value="P:female gonad development"/>
    <property type="evidence" value="ECO:0007669"/>
    <property type="project" value="TreeGrafter"/>
</dbReference>
<dbReference type="GO" id="GO:0007613">
    <property type="term" value="P:memory"/>
    <property type="evidence" value="ECO:0000315"/>
    <property type="project" value="AgBase"/>
</dbReference>
<dbReference type="GO" id="GO:2000844">
    <property type="term" value="P:negative regulation of testosterone secretion"/>
    <property type="evidence" value="ECO:0000315"/>
    <property type="project" value="AgBase"/>
</dbReference>
<dbReference type="GO" id="GO:0008284">
    <property type="term" value="P:positive regulation of cell population proliferation"/>
    <property type="evidence" value="ECO:0000315"/>
    <property type="project" value="AgBase"/>
</dbReference>
<dbReference type="GO" id="GO:2000866">
    <property type="term" value="P:positive regulation of estradiol secretion"/>
    <property type="evidence" value="ECO:0000315"/>
    <property type="project" value="AgBase"/>
</dbReference>
<dbReference type="GO" id="GO:2000027">
    <property type="term" value="P:regulation of animal organ morphogenesis"/>
    <property type="evidence" value="ECO:0000315"/>
    <property type="project" value="AgBase"/>
</dbReference>
<dbReference type="GO" id="GO:0061477">
    <property type="term" value="P:response to aromatase inhibitor"/>
    <property type="evidence" value="ECO:0000314"/>
    <property type="project" value="AgBase"/>
</dbReference>
<dbReference type="GO" id="GO:0035176">
    <property type="term" value="P:social behavior"/>
    <property type="evidence" value="ECO:0000315"/>
    <property type="project" value="AgBase"/>
</dbReference>
<dbReference type="GO" id="GO:0009888">
    <property type="term" value="P:tissue development"/>
    <property type="evidence" value="ECO:0000315"/>
    <property type="project" value="AgBase"/>
</dbReference>
<dbReference type="CDD" id="cd20616">
    <property type="entry name" value="CYP19A1"/>
    <property type="match status" value="1"/>
</dbReference>
<dbReference type="FunFam" id="1.10.630.10:FF:000032">
    <property type="entry name" value="Cytochrome P450 aromatase"/>
    <property type="match status" value="1"/>
</dbReference>
<dbReference type="Gene3D" id="1.10.630.10">
    <property type="entry name" value="Cytochrome P450"/>
    <property type="match status" value="1"/>
</dbReference>
<dbReference type="InterPro" id="IPR001128">
    <property type="entry name" value="Cyt_P450"/>
</dbReference>
<dbReference type="InterPro" id="IPR017972">
    <property type="entry name" value="Cyt_P450_CS"/>
</dbReference>
<dbReference type="InterPro" id="IPR002401">
    <property type="entry name" value="Cyt_P450_E_grp-I"/>
</dbReference>
<dbReference type="InterPro" id="IPR036396">
    <property type="entry name" value="Cyt_P450_sf"/>
</dbReference>
<dbReference type="InterPro" id="IPR050196">
    <property type="entry name" value="Cytochrome_P450_Monoox"/>
</dbReference>
<dbReference type="PANTHER" id="PTHR24291:SF43">
    <property type="entry name" value="AROMATASE"/>
    <property type="match status" value="1"/>
</dbReference>
<dbReference type="PANTHER" id="PTHR24291">
    <property type="entry name" value="CYTOCHROME P450 FAMILY 4"/>
    <property type="match status" value="1"/>
</dbReference>
<dbReference type="Pfam" id="PF00067">
    <property type="entry name" value="p450"/>
    <property type="match status" value="1"/>
</dbReference>
<dbReference type="PRINTS" id="PR00463">
    <property type="entry name" value="EP450I"/>
</dbReference>
<dbReference type="PRINTS" id="PR00385">
    <property type="entry name" value="P450"/>
</dbReference>
<dbReference type="SUPFAM" id="SSF48264">
    <property type="entry name" value="Cytochrome P450"/>
    <property type="match status" value="1"/>
</dbReference>
<dbReference type="PROSITE" id="PS00086">
    <property type="entry name" value="CYTOCHROME_P450"/>
    <property type="match status" value="1"/>
</dbReference>
<reference key="1">
    <citation type="journal article" date="1994" name="Brain Res. Mol. Brain Res.">
        <title>Isolation and characterization of a zebra finch aromatase cDNA: in situ hybridization reveals high aromatase expression in brain.</title>
        <authorList>
            <person name="Shen P."/>
            <person name="Campagnoni C.W."/>
            <person name="Kampf K."/>
            <person name="Schlinger B.A."/>
            <person name="Arnold A.P."/>
            <person name="Campagnoni A.T."/>
        </authorList>
    </citation>
    <scope>NUCLEOTIDE SEQUENCE [MRNA]</scope>
    <source>
        <tissue>Ovary</tissue>
    </source>
</reference>
<feature type="chain" id="PRO_0000051973" description="Aromatase">
    <location>
        <begin position="1"/>
        <end position="509"/>
    </location>
</feature>
<feature type="binding site" description="axial binding residue" evidence="1">
    <location>
        <position position="437"/>
    </location>
    <ligand>
        <name>heme</name>
        <dbReference type="ChEBI" id="CHEBI:30413"/>
    </ligand>
    <ligandPart>
        <name>Fe</name>
        <dbReference type="ChEBI" id="CHEBI:18248"/>
    </ligandPart>
</feature>
<accession>Q92112</accession>
<sequence>MVLETLNPLHYNITSLVPDTMPVATVPILILMCFLFLIWNHEETSSIPGPGYCMGIGPLISHGRFLWMGVGNACNYYNKTYGDFVRVWISGEETFIISKSSSVSHVMKHWHYVSRFGSKLGLQCIGMYENGIIFNNNPAHWKEIRPFFTKALSGPGLVRMIAICVESTTEHLDRLQEVTTELGNINALNLMRRIMLDTSNKLFLGVPLDENAIVLKIQNYFDAWQALLLKPDIFFKISWLCKKYKDAVKDLKGAMEILIEQKRQKLSTVEKLDEHMDFASQLIFAQNRGDLTAENVNQCVLEMMIAAPDTLSVTLFFMLILIAEHPTVEEEMMREIETVVGDRDIQSDDMPNLKIVENFIYESMRYQPVVDLIMRKALQDDVIDGYPVKKGTNIILNIGRMHKLEFFPKPNEFSLENFEKNVPSRYFQPFGFGPRSCVGKFIAMVMMKAILVTLLRRCRVQTMKGRGLNNIQKNNDLSMHPIERQPLLEMVFTPRRNANENQGDGMDQH</sequence>
<protein>
    <recommendedName>
        <fullName>Aromatase</fullName>
        <ecNumber evidence="2">1.14.14.14</ecNumber>
    </recommendedName>
    <alternativeName>
        <fullName>CYPXIX</fullName>
    </alternativeName>
    <alternativeName>
        <fullName>Cytochrome P-450AROM</fullName>
    </alternativeName>
    <alternativeName>
        <fullName>Cytochrome P450 19A1</fullName>
    </alternativeName>
    <alternativeName>
        <fullName>Estrogen synthase</fullName>
    </alternativeName>
</protein>